<name>GLPB_VIBCM</name>
<sequence length="436" mass="48094">MMHYDVAVIGGGIAGYSAALRALQAGKKVVLINQGQSALHFSSGSIDVLGRLPDGSVVNQPFDALSALQQQVPEHPYSKVGRKNSEKGLMWFKRTLDSAHVPLHHEPDGANHWRITPLGTLKNTWLSQPFVYPYRGNADFSRIMIVAIDGYRDFQPAMLRDNLAQRPELANTPMLTVNVSIPGFEGFRRNPNELRSIDIARLLRQESAWNALCDQLMRVARPDDLVIMPAIMGNGDGLHLMSKLQQVTQLRFHEVPTMPPSLLGIRIEEALHRSFIQGGGVQLKGDKVIDGDFAGSRLTAIHTQNLRDFPISAEHYVMATGSYFSQGLQASQHAIQEPTFALDVQQNPDRAQWRHAQFIAAQSHPFMTFGVTTDANLHPSRQGKTIDNLWCCGAMLSGYDPVFEGCGGGVAIATAYHAVEQILATYAQTKQPEVLL</sequence>
<organism>
    <name type="scientific">Vibrio cholerae serotype O1 (strain M66-2)</name>
    <dbReference type="NCBI Taxonomy" id="579112"/>
    <lineage>
        <taxon>Bacteria</taxon>
        <taxon>Pseudomonadati</taxon>
        <taxon>Pseudomonadota</taxon>
        <taxon>Gammaproteobacteria</taxon>
        <taxon>Vibrionales</taxon>
        <taxon>Vibrionaceae</taxon>
        <taxon>Vibrio</taxon>
    </lineage>
</organism>
<comment type="function">
    <text evidence="1">Conversion of glycerol 3-phosphate to dihydroxyacetone. Uses fumarate or nitrate as electron acceptor.</text>
</comment>
<comment type="catalytic activity">
    <reaction evidence="1">
        <text>a quinone + sn-glycerol 3-phosphate = dihydroxyacetone phosphate + a quinol</text>
        <dbReference type="Rhea" id="RHEA:18977"/>
        <dbReference type="ChEBI" id="CHEBI:24646"/>
        <dbReference type="ChEBI" id="CHEBI:57597"/>
        <dbReference type="ChEBI" id="CHEBI:57642"/>
        <dbReference type="ChEBI" id="CHEBI:132124"/>
        <dbReference type="EC" id="1.1.5.3"/>
    </reaction>
</comment>
<comment type="cofactor">
    <cofactor evidence="1">
        <name>FMN</name>
        <dbReference type="ChEBI" id="CHEBI:58210"/>
    </cofactor>
</comment>
<comment type="pathway">
    <text evidence="1">Polyol metabolism; glycerol degradation via glycerol kinase pathway; glycerone phosphate from sn-glycerol 3-phosphate (anaerobic route): step 1/1.</text>
</comment>
<comment type="subunit">
    <text evidence="1">Composed of a catalytic GlpA/B dimer and of membrane bound GlpC.</text>
</comment>
<comment type="similarity">
    <text evidence="1">Belongs to the anaerobic G-3-P dehydrogenase subunit B family.</text>
</comment>
<protein>
    <recommendedName>
        <fullName evidence="1">Anaerobic glycerol-3-phosphate dehydrogenase subunit B</fullName>
        <shortName evidence="1">Anaerobic G-3-P dehydrogenase subunit B</shortName>
        <shortName evidence="1">Anaerobic G3Pdhase B</shortName>
        <ecNumber evidence="1">1.1.5.3</ecNumber>
    </recommendedName>
</protein>
<keyword id="KW-0285">Flavoprotein</keyword>
<keyword id="KW-0288">FMN</keyword>
<keyword id="KW-0560">Oxidoreductase</keyword>
<reference key="1">
    <citation type="journal article" date="2008" name="PLoS ONE">
        <title>A recalibrated molecular clock and independent origins for the cholera pandemic clones.</title>
        <authorList>
            <person name="Feng L."/>
            <person name="Reeves P.R."/>
            <person name="Lan R."/>
            <person name="Ren Y."/>
            <person name="Gao C."/>
            <person name="Zhou Z."/>
            <person name="Ren Y."/>
            <person name="Cheng J."/>
            <person name="Wang W."/>
            <person name="Wang J."/>
            <person name="Qian W."/>
            <person name="Li D."/>
            <person name="Wang L."/>
        </authorList>
    </citation>
    <scope>NUCLEOTIDE SEQUENCE [LARGE SCALE GENOMIC DNA]</scope>
    <source>
        <strain>M66-2</strain>
    </source>
</reference>
<gene>
    <name evidence="1" type="primary">glpB</name>
    <name type="ordered locus">VCM66_A0707</name>
</gene>
<evidence type="ECO:0000255" key="1">
    <source>
        <dbReference type="HAMAP-Rule" id="MF_00753"/>
    </source>
</evidence>
<proteinExistence type="inferred from homology"/>
<dbReference type="EC" id="1.1.5.3" evidence="1"/>
<dbReference type="EMBL" id="CP001234">
    <property type="protein sequence ID" value="ACP07669.1"/>
    <property type="molecule type" value="Genomic_DNA"/>
</dbReference>
<dbReference type="RefSeq" id="WP_000972325.1">
    <property type="nucleotide sequence ID" value="NC_012580.1"/>
</dbReference>
<dbReference type="KEGG" id="vcm:VCM66_A0707"/>
<dbReference type="HOGENOM" id="CLU_047793_0_0_6"/>
<dbReference type="UniPathway" id="UPA00618">
    <property type="reaction ID" value="UER00673"/>
</dbReference>
<dbReference type="Proteomes" id="UP000001217">
    <property type="component" value="Chromosome II"/>
</dbReference>
<dbReference type="GO" id="GO:0009331">
    <property type="term" value="C:glycerol-3-phosphate dehydrogenase (FAD) complex"/>
    <property type="evidence" value="ECO:0007669"/>
    <property type="project" value="InterPro"/>
</dbReference>
<dbReference type="GO" id="GO:0004368">
    <property type="term" value="F:glycerol-3-phosphate dehydrogenase (quinone) activity"/>
    <property type="evidence" value="ECO:0007669"/>
    <property type="project" value="UniProtKB-UniRule"/>
</dbReference>
<dbReference type="GO" id="GO:0019563">
    <property type="term" value="P:glycerol catabolic process"/>
    <property type="evidence" value="ECO:0007669"/>
    <property type="project" value="UniProtKB-UniRule"/>
</dbReference>
<dbReference type="Gene3D" id="3.50.50.60">
    <property type="entry name" value="FAD/NAD(P)-binding domain"/>
    <property type="match status" value="1"/>
</dbReference>
<dbReference type="HAMAP" id="MF_00753">
    <property type="entry name" value="Glycerol3P_GlpB"/>
    <property type="match status" value="1"/>
</dbReference>
<dbReference type="InterPro" id="IPR003953">
    <property type="entry name" value="FAD-dep_OxRdtase_2_FAD-bd"/>
</dbReference>
<dbReference type="InterPro" id="IPR036188">
    <property type="entry name" value="FAD/NAD-bd_sf"/>
</dbReference>
<dbReference type="InterPro" id="IPR009158">
    <property type="entry name" value="G3P_DH_GlpB_su"/>
</dbReference>
<dbReference type="InterPro" id="IPR051691">
    <property type="entry name" value="Metab_Enz_Cyan_OpOx_G3PDH"/>
</dbReference>
<dbReference type="NCBIfam" id="TIGR03378">
    <property type="entry name" value="glycerol3P_GlpB"/>
    <property type="match status" value="1"/>
</dbReference>
<dbReference type="NCBIfam" id="NF003719">
    <property type="entry name" value="PRK05329.1-2"/>
    <property type="match status" value="1"/>
</dbReference>
<dbReference type="NCBIfam" id="NF003720">
    <property type="entry name" value="PRK05329.1-3"/>
    <property type="match status" value="1"/>
</dbReference>
<dbReference type="PANTHER" id="PTHR42949">
    <property type="entry name" value="ANAEROBIC GLYCEROL-3-PHOSPHATE DEHYDROGENASE SUBUNIT B"/>
    <property type="match status" value="1"/>
</dbReference>
<dbReference type="PANTHER" id="PTHR42949:SF3">
    <property type="entry name" value="ANAEROBIC GLYCEROL-3-PHOSPHATE DEHYDROGENASE SUBUNIT B"/>
    <property type="match status" value="1"/>
</dbReference>
<dbReference type="Pfam" id="PF00890">
    <property type="entry name" value="FAD_binding_2"/>
    <property type="match status" value="1"/>
</dbReference>
<dbReference type="PIRSF" id="PIRSF000141">
    <property type="entry name" value="Anaerobic_G3P_dh"/>
    <property type="match status" value="1"/>
</dbReference>
<dbReference type="SUPFAM" id="SSF51905">
    <property type="entry name" value="FAD/NAD(P)-binding domain"/>
    <property type="match status" value="1"/>
</dbReference>
<feature type="chain" id="PRO_1000148361" description="Anaerobic glycerol-3-phosphate dehydrogenase subunit B">
    <location>
        <begin position="1"/>
        <end position="436"/>
    </location>
</feature>
<accession>C3LW14</accession>